<name>36010_ASFWA</name>
<protein>
    <recommendedName>
        <fullName>Protein MGF 360-10L</fullName>
    </recommendedName>
</protein>
<feature type="chain" id="PRO_0000373272" description="Protein MGF 360-10L">
    <location>
        <begin position="1"/>
        <end position="353"/>
    </location>
</feature>
<feature type="transmembrane region" description="Helical" evidence="2">
    <location>
        <begin position="206"/>
        <end position="228"/>
    </location>
</feature>
<feature type="transmembrane region" description="Helical" evidence="2">
    <location>
        <begin position="249"/>
        <end position="271"/>
    </location>
</feature>
<feature type="repeat" description="ANK">
    <location>
        <begin position="57"/>
        <end position="89"/>
    </location>
</feature>
<feature type="glycosylation site" description="N-linked (GlcNAc...) asparagine; by host" evidence="2">
    <location>
        <position position="172"/>
    </location>
</feature>
<feature type="glycosylation site" description="N-linked (GlcNAc...) asparagine; by host" evidence="2">
    <location>
        <position position="342"/>
    </location>
</feature>
<proteinExistence type="inferred from homology"/>
<keyword id="KW-0040">ANK repeat</keyword>
<keyword id="KW-0325">Glycoprotein</keyword>
<keyword id="KW-1043">Host membrane</keyword>
<keyword id="KW-0472">Membrane</keyword>
<keyword id="KW-0812">Transmembrane</keyword>
<keyword id="KW-1133">Transmembrane helix</keyword>
<comment type="function">
    <text evidence="1">Plays a role in virus cell tropism, and may be required for efficient virus replication in macrophages.</text>
</comment>
<comment type="subcellular location">
    <subcellularLocation>
        <location evidence="3">Host membrane</location>
        <topology evidence="3">Multi-pass membrane protein</topology>
    </subcellularLocation>
</comment>
<comment type="similarity">
    <text evidence="3">Belongs to the asfivirus MGF 360 family.</text>
</comment>
<sequence>MFPSLQSFAKKVLARQHVSIDYHVILERCGLWWYKAPISLDCKHMLIKLPSFADGLDLNTALMLATKENNYQLIKLFTEWGADINYGLICANTPPVRELCWELGAKYRVDKKKIMHMFFKLIHPGTTSSNIILCLKLFNDNPFSAYVIIREIKSSIYWKLKKLVEDTDVLSNISDGDMLTIYCFMVALQDNLREAISYVYQHFKYLNTWWLICALCFNKLFDLHNLYEKEKIRMDMDEMMRIACTKDNNFLTIYYCFILGANINLAMIASIRFYNMDNLFFCIDLGADAFEEAKALAEQRNYFLISHRLSLDIYSPDSSLLTLKEADPNKIYHLLKNYKSKNMTAYFNHDDTI</sequence>
<dbReference type="EMBL" id="AY261366">
    <property type="status" value="NOT_ANNOTATED_CDS"/>
    <property type="molecule type" value="Genomic_DNA"/>
</dbReference>
<dbReference type="SMR" id="P0C9P3"/>
<dbReference type="Proteomes" id="UP000000858">
    <property type="component" value="Segment"/>
</dbReference>
<dbReference type="GO" id="GO:0033644">
    <property type="term" value="C:host cell membrane"/>
    <property type="evidence" value="ECO:0007669"/>
    <property type="project" value="UniProtKB-SubCell"/>
</dbReference>
<dbReference type="GO" id="GO:0016020">
    <property type="term" value="C:membrane"/>
    <property type="evidence" value="ECO:0007669"/>
    <property type="project" value="UniProtKB-KW"/>
</dbReference>
<dbReference type="GO" id="GO:0042330">
    <property type="term" value="P:taxis"/>
    <property type="evidence" value="ECO:0007669"/>
    <property type="project" value="InterPro"/>
</dbReference>
<dbReference type="InterPro" id="IPR002110">
    <property type="entry name" value="Ankyrin_rpt"/>
</dbReference>
<dbReference type="InterPro" id="IPR036770">
    <property type="entry name" value="Ankyrin_rpt-contain_sf"/>
</dbReference>
<dbReference type="InterPro" id="IPR002595">
    <property type="entry name" value="ASFV_MGF360"/>
</dbReference>
<dbReference type="Pfam" id="PF01671">
    <property type="entry name" value="ASFV_360"/>
    <property type="match status" value="1"/>
</dbReference>
<dbReference type="SUPFAM" id="SSF48403">
    <property type="entry name" value="Ankyrin repeat"/>
    <property type="match status" value="1"/>
</dbReference>
<dbReference type="PROSITE" id="PS50297">
    <property type="entry name" value="ANK_REP_REGION"/>
    <property type="match status" value="1"/>
</dbReference>
<dbReference type="PROSITE" id="PS50088">
    <property type="entry name" value="ANK_REPEAT"/>
    <property type="match status" value="1"/>
</dbReference>
<accession>P0C9P3</accession>
<gene>
    <name type="ordered locus">War-030</name>
</gene>
<evidence type="ECO:0000250" key="1"/>
<evidence type="ECO:0000255" key="2"/>
<evidence type="ECO:0000305" key="3"/>
<organism>
    <name type="scientific">African swine fever virus (isolate Warthog/Namibia/Wart80/1980)</name>
    <name type="common">ASFV</name>
    <dbReference type="NCBI Taxonomy" id="561444"/>
    <lineage>
        <taxon>Viruses</taxon>
        <taxon>Varidnaviria</taxon>
        <taxon>Bamfordvirae</taxon>
        <taxon>Nucleocytoviricota</taxon>
        <taxon>Pokkesviricetes</taxon>
        <taxon>Asfuvirales</taxon>
        <taxon>Asfarviridae</taxon>
        <taxon>Asfivirus</taxon>
        <taxon>African swine fever virus</taxon>
    </lineage>
</organism>
<organismHost>
    <name type="scientific">Ornithodoros</name>
    <name type="common">relapsing fever ticks</name>
    <dbReference type="NCBI Taxonomy" id="6937"/>
</organismHost>
<organismHost>
    <name type="scientific">Phacochoerus aethiopicus</name>
    <name type="common">Warthog</name>
    <dbReference type="NCBI Taxonomy" id="85517"/>
</organismHost>
<organismHost>
    <name type="scientific">Phacochoerus africanus</name>
    <name type="common">Warthog</name>
    <dbReference type="NCBI Taxonomy" id="41426"/>
</organismHost>
<organismHost>
    <name type="scientific">Potamochoerus larvatus</name>
    <name type="common">Bushpig</name>
    <dbReference type="NCBI Taxonomy" id="273792"/>
</organismHost>
<organismHost>
    <name type="scientific">Sus scrofa</name>
    <name type="common">Pig</name>
    <dbReference type="NCBI Taxonomy" id="9823"/>
</organismHost>
<reference key="1">
    <citation type="submission" date="2003-03" db="EMBL/GenBank/DDBJ databases">
        <title>African swine fever virus genomes.</title>
        <authorList>
            <person name="Kutish G.F."/>
            <person name="Rock D.L."/>
        </authorList>
    </citation>
    <scope>NUCLEOTIDE SEQUENCE [LARGE SCALE GENOMIC DNA]</scope>
</reference>